<organism>
    <name type="scientific">Saccharomyces cerevisiae (strain ATCC 204508 / S288c)</name>
    <name type="common">Baker's yeast</name>
    <dbReference type="NCBI Taxonomy" id="559292"/>
    <lineage>
        <taxon>Eukaryota</taxon>
        <taxon>Fungi</taxon>
        <taxon>Dikarya</taxon>
        <taxon>Ascomycota</taxon>
        <taxon>Saccharomycotina</taxon>
        <taxon>Saccharomycetes</taxon>
        <taxon>Saccharomycetales</taxon>
        <taxon>Saccharomycetaceae</taxon>
        <taxon>Saccharomyces</taxon>
    </lineage>
</organism>
<reference key="1">
    <citation type="journal article" date="1995" name="Biochim. Biophys. Acta">
        <title>The nuclear-encoded MSS2 gene is involved in the expression of the mitochondrial cytochrome-c oxidase subunit 2 (Cox2).</title>
        <authorList>
            <person name="Simon M."/>
            <person name="Seraphin B."/>
            <person name="Faye G."/>
        </authorList>
    </citation>
    <scope>NUCLEOTIDE SEQUENCE [GENOMIC DNA]</scope>
    <source>
        <strain>ATCC 204510 / AB320</strain>
    </source>
</reference>
<reference key="2">
    <citation type="journal article" date="1996" name="Yeast">
        <title>The sequence of a 20.3 kb DNA fragment from the left arm of Saccharomyces cerevisiae chromosome IV contains the KIN28, MSS2, PHO2, POL3 and DUN1 genes, and six new open reading frames.</title>
        <authorList>
            <person name="Saiz J.E."/>
            <person name="Buitrago M.J."/>
            <person name="Garcia R."/>
            <person name="Revuelta J.L."/>
            <person name="del Rey F."/>
        </authorList>
    </citation>
    <scope>NUCLEOTIDE SEQUENCE [GENOMIC DNA]</scope>
    <source>
        <strain>ATCC 96604 / S288c / FY1679</strain>
    </source>
</reference>
<reference key="3">
    <citation type="journal article" date="1997" name="Nature">
        <title>The nucleotide sequence of Saccharomyces cerevisiae chromosome IV.</title>
        <authorList>
            <person name="Jacq C."/>
            <person name="Alt-Moerbe J."/>
            <person name="Andre B."/>
            <person name="Arnold W."/>
            <person name="Bahr A."/>
            <person name="Ballesta J.P.G."/>
            <person name="Bargues M."/>
            <person name="Baron L."/>
            <person name="Becker A."/>
            <person name="Biteau N."/>
            <person name="Bloecker H."/>
            <person name="Blugeon C."/>
            <person name="Boskovic J."/>
            <person name="Brandt P."/>
            <person name="Brueckner M."/>
            <person name="Buitrago M.J."/>
            <person name="Coster F."/>
            <person name="Delaveau T."/>
            <person name="del Rey F."/>
            <person name="Dujon B."/>
            <person name="Eide L.G."/>
            <person name="Garcia-Cantalejo J.M."/>
            <person name="Goffeau A."/>
            <person name="Gomez-Peris A."/>
            <person name="Granotier C."/>
            <person name="Hanemann V."/>
            <person name="Hankeln T."/>
            <person name="Hoheisel J.D."/>
            <person name="Jaeger W."/>
            <person name="Jimenez A."/>
            <person name="Jonniaux J.-L."/>
            <person name="Kraemer C."/>
            <person name="Kuester H."/>
            <person name="Laamanen P."/>
            <person name="Legros Y."/>
            <person name="Louis E.J."/>
            <person name="Moeller-Rieker S."/>
            <person name="Monnet A."/>
            <person name="Moro M."/>
            <person name="Mueller-Auer S."/>
            <person name="Nussbaumer B."/>
            <person name="Paricio N."/>
            <person name="Paulin L."/>
            <person name="Perea J."/>
            <person name="Perez-Alonso M."/>
            <person name="Perez-Ortin J.E."/>
            <person name="Pohl T.M."/>
            <person name="Prydz H."/>
            <person name="Purnelle B."/>
            <person name="Rasmussen S.W."/>
            <person name="Remacha M.A."/>
            <person name="Revuelta J.L."/>
            <person name="Rieger M."/>
            <person name="Salom D."/>
            <person name="Saluz H.P."/>
            <person name="Saiz J.E."/>
            <person name="Saren A.-M."/>
            <person name="Schaefer M."/>
            <person name="Scharfe M."/>
            <person name="Schmidt E.R."/>
            <person name="Schneider C."/>
            <person name="Scholler P."/>
            <person name="Schwarz S."/>
            <person name="Soler-Mira A."/>
            <person name="Urrestarazu L.A."/>
            <person name="Verhasselt P."/>
            <person name="Vissers S."/>
            <person name="Voet M."/>
            <person name="Volckaert G."/>
            <person name="Wagner G."/>
            <person name="Wambutt R."/>
            <person name="Wedler E."/>
            <person name="Wedler H."/>
            <person name="Woelfl S."/>
            <person name="Harris D.E."/>
            <person name="Bowman S."/>
            <person name="Brown D."/>
            <person name="Churcher C.M."/>
            <person name="Connor R."/>
            <person name="Dedman K."/>
            <person name="Gentles S."/>
            <person name="Hamlin N."/>
            <person name="Hunt S."/>
            <person name="Jones L."/>
            <person name="McDonald S."/>
            <person name="Murphy L.D."/>
            <person name="Niblett D."/>
            <person name="Odell C."/>
            <person name="Oliver K."/>
            <person name="Rajandream M.A."/>
            <person name="Richards C."/>
            <person name="Shore L."/>
            <person name="Walsh S.V."/>
            <person name="Barrell B.G."/>
            <person name="Dietrich F.S."/>
            <person name="Mulligan J.T."/>
            <person name="Allen E."/>
            <person name="Araujo R."/>
            <person name="Aviles E."/>
            <person name="Berno A."/>
            <person name="Carpenter J."/>
            <person name="Chen E."/>
            <person name="Cherry J.M."/>
            <person name="Chung E."/>
            <person name="Duncan M."/>
            <person name="Hunicke-Smith S."/>
            <person name="Hyman R.W."/>
            <person name="Komp C."/>
            <person name="Lashkari D."/>
            <person name="Lew H."/>
            <person name="Lin D."/>
            <person name="Mosedale D."/>
            <person name="Nakahara K."/>
            <person name="Namath A."/>
            <person name="Oefner P."/>
            <person name="Oh C."/>
            <person name="Petel F.X."/>
            <person name="Roberts D."/>
            <person name="Schramm S."/>
            <person name="Schroeder M."/>
            <person name="Shogren T."/>
            <person name="Shroff N."/>
            <person name="Winant A."/>
            <person name="Yelton M.A."/>
            <person name="Botstein D."/>
            <person name="Davis R.W."/>
            <person name="Johnston M."/>
            <person name="Andrews S."/>
            <person name="Brinkman R."/>
            <person name="Cooper J."/>
            <person name="Ding H."/>
            <person name="Du Z."/>
            <person name="Favello A."/>
            <person name="Fulton L."/>
            <person name="Gattung S."/>
            <person name="Greco T."/>
            <person name="Hallsworth K."/>
            <person name="Hawkins J."/>
            <person name="Hillier L.W."/>
            <person name="Jier M."/>
            <person name="Johnson D."/>
            <person name="Johnston L."/>
            <person name="Kirsten J."/>
            <person name="Kucaba T."/>
            <person name="Langston Y."/>
            <person name="Latreille P."/>
            <person name="Le T."/>
            <person name="Mardis E."/>
            <person name="Menezes S."/>
            <person name="Miller N."/>
            <person name="Nhan M."/>
            <person name="Pauley A."/>
            <person name="Peluso D."/>
            <person name="Rifkin L."/>
            <person name="Riles L."/>
            <person name="Taich A."/>
            <person name="Trevaskis E."/>
            <person name="Vignati D."/>
            <person name="Wilcox L."/>
            <person name="Wohldman P."/>
            <person name="Vaudin M."/>
            <person name="Wilson R."/>
            <person name="Waterston R."/>
            <person name="Albermann K."/>
            <person name="Hani J."/>
            <person name="Heumann K."/>
            <person name="Kleine K."/>
            <person name="Mewes H.-W."/>
            <person name="Zollner A."/>
            <person name="Zaccaria P."/>
        </authorList>
    </citation>
    <scope>NUCLEOTIDE SEQUENCE [LARGE SCALE GENOMIC DNA]</scope>
    <source>
        <strain>ATCC 204508 / S288c</strain>
    </source>
</reference>
<reference key="4">
    <citation type="journal article" date="2014" name="G3 (Bethesda)">
        <title>The reference genome sequence of Saccharomyces cerevisiae: Then and now.</title>
        <authorList>
            <person name="Engel S.R."/>
            <person name="Dietrich F.S."/>
            <person name="Fisk D.G."/>
            <person name="Binkley G."/>
            <person name="Balakrishnan R."/>
            <person name="Costanzo M.C."/>
            <person name="Dwight S.S."/>
            <person name="Hitz B.C."/>
            <person name="Karra K."/>
            <person name="Nash R.S."/>
            <person name="Weng S."/>
            <person name="Wong E.D."/>
            <person name="Lloyd P."/>
            <person name="Skrzypek M.S."/>
            <person name="Miyasato S.R."/>
            <person name="Simison M."/>
            <person name="Cherry J.M."/>
        </authorList>
    </citation>
    <scope>GENOME REANNOTATION</scope>
    <source>
        <strain>ATCC 204508 / S288c</strain>
    </source>
</reference>
<reference key="5">
    <citation type="journal article" date="2001" name="Mol. Cell. Biol.">
        <title>Peripheral mitochondrial inner membrane protein, Mss2p, required for export of the mitochondrially coded Cox2p C tail in Saccharomyces cerevisiae.</title>
        <authorList>
            <person name="Broadley S.A."/>
            <person name="Demlow C.M."/>
            <person name="Fox T.D."/>
        </authorList>
    </citation>
    <scope>FUNCTION</scope>
</reference>
<reference key="6">
    <citation type="journal article" date="2002" name="Mol. Biol. Cell">
        <title>Cox18p is required for export of the mitochondrially encoded Saccharomyces cerevisiae Cox2p C-tail and interacts with Pnt1p and Mss2p in the inner membrane.</title>
        <authorList>
            <person name="Saracco S.A."/>
            <person name="Fox T.D."/>
        </authorList>
    </citation>
    <scope>INTERACTION WITH COX18</scope>
</reference>
<reference key="7">
    <citation type="journal article" date="2003" name="Nature">
        <title>Global analysis of protein expression in yeast.</title>
        <authorList>
            <person name="Ghaemmaghami S."/>
            <person name="Huh W.-K."/>
            <person name="Bower K."/>
            <person name="Howson R.W."/>
            <person name="Belle A."/>
            <person name="Dephoure N."/>
            <person name="O'Shea E.K."/>
            <person name="Weissman J.S."/>
        </authorList>
    </citation>
    <scope>LEVEL OF PROTEIN EXPRESSION [LARGE SCALE ANALYSIS]</scope>
</reference>
<keyword id="KW-0472">Membrane</keyword>
<keyword id="KW-0496">Mitochondrion</keyword>
<keyword id="KW-0999">Mitochondrion inner membrane</keyword>
<keyword id="KW-1185">Reference proteome</keyword>
<keyword id="KW-0677">Repeat</keyword>
<keyword id="KW-0802">TPR repeat</keyword>
<keyword id="KW-0809">Transit peptide</keyword>
<name>MSS2_YEAST</name>
<feature type="transit peptide" description="Mitochondrion" evidence="1">
    <location>
        <begin position="1"/>
        <end status="unknown"/>
    </location>
</feature>
<feature type="chain" id="PRO_0000021773" description="Protein MSS2, mitochondrial">
    <location>
        <begin status="unknown"/>
        <end position="351"/>
    </location>
</feature>
<feature type="repeat" description="TPR 1">
    <location>
        <begin position="155"/>
        <end position="188"/>
    </location>
</feature>
<feature type="repeat" description="TPR 2">
    <location>
        <begin position="260"/>
        <end position="294"/>
    </location>
</feature>
<feature type="sequence conflict" description="In Ref. 1." evidence="5" ref="1">
    <original>TGMEIMDLECFFGFFDCCVKEENFKGARDCLESVKKLGNDKDKKTMINVFLESRKDSIKLLDKARL</original>
    <variation>RVWNMT</variation>
    <location>
        <begin position="286"/>
        <end position="351"/>
    </location>
</feature>
<dbReference type="EMBL" id="X81477">
    <property type="protein sequence ID" value="CAA57230.1"/>
    <property type="molecule type" value="Genomic_DNA"/>
</dbReference>
<dbReference type="EMBL" id="X95644">
    <property type="protein sequence ID" value="CAA64905.1"/>
    <property type="molecule type" value="Genomic_DNA"/>
</dbReference>
<dbReference type="EMBL" id="Z74155">
    <property type="protein sequence ID" value="CAA98674.1"/>
    <property type="molecule type" value="Genomic_DNA"/>
</dbReference>
<dbReference type="EMBL" id="BK006938">
    <property type="protein sequence ID" value="DAA11753.1"/>
    <property type="molecule type" value="Genomic_DNA"/>
</dbReference>
<dbReference type="PIR" id="S67649">
    <property type="entry name" value="S67649"/>
</dbReference>
<dbReference type="RefSeq" id="NP_010176.1">
    <property type="nucleotide sequence ID" value="NM_001180166.1"/>
</dbReference>
<dbReference type="SMR" id="P40990"/>
<dbReference type="BioGRID" id="31955">
    <property type="interactions" value="153"/>
</dbReference>
<dbReference type="FunCoup" id="P40990">
    <property type="interactions" value="21"/>
</dbReference>
<dbReference type="IntAct" id="P40990">
    <property type="interactions" value="1"/>
</dbReference>
<dbReference type="STRING" id="4932.YDL107W"/>
<dbReference type="iPTMnet" id="P40990"/>
<dbReference type="PaxDb" id="4932-YDL107W"/>
<dbReference type="PeptideAtlas" id="P40990"/>
<dbReference type="EnsemblFungi" id="YDL107W_mRNA">
    <property type="protein sequence ID" value="YDL107W"/>
    <property type="gene ID" value="YDL107W"/>
</dbReference>
<dbReference type="GeneID" id="851451"/>
<dbReference type="KEGG" id="sce:YDL107W"/>
<dbReference type="AGR" id="SGD:S000002265"/>
<dbReference type="SGD" id="S000002265">
    <property type="gene designation" value="MSS2"/>
</dbReference>
<dbReference type="VEuPathDB" id="FungiDB:YDL107W"/>
<dbReference type="eggNOG" id="ENOG502QU4R">
    <property type="taxonomic scope" value="Eukaryota"/>
</dbReference>
<dbReference type="HOGENOM" id="CLU_047859_0_0_1"/>
<dbReference type="InParanoid" id="P40990"/>
<dbReference type="OMA" id="WFKLGME"/>
<dbReference type="OrthoDB" id="1658288at2759"/>
<dbReference type="BioCyc" id="YEAST:G3O-29508-MONOMER"/>
<dbReference type="PRO" id="PR:P40990"/>
<dbReference type="Proteomes" id="UP000002311">
    <property type="component" value="Chromosome IV"/>
</dbReference>
<dbReference type="RNAct" id="P40990">
    <property type="molecule type" value="protein"/>
</dbReference>
<dbReference type="GO" id="GO:0005743">
    <property type="term" value="C:mitochondrial inner membrane"/>
    <property type="evidence" value="ECO:0007669"/>
    <property type="project" value="UniProtKB-SubCell"/>
</dbReference>
<dbReference type="GO" id="GO:0005759">
    <property type="term" value="C:mitochondrial matrix"/>
    <property type="evidence" value="ECO:0000314"/>
    <property type="project" value="SGD"/>
</dbReference>
<dbReference type="GO" id="GO:0032979">
    <property type="term" value="P:protein insertion into mitochondrial inner membrane from matrix"/>
    <property type="evidence" value="ECO:0000315"/>
    <property type="project" value="SGD"/>
</dbReference>
<dbReference type="Gene3D" id="1.25.40.10">
    <property type="entry name" value="Tetratricopeptide repeat domain"/>
    <property type="match status" value="1"/>
</dbReference>
<dbReference type="InterPro" id="IPR011990">
    <property type="entry name" value="TPR-like_helical_dom_sf"/>
</dbReference>
<dbReference type="SUPFAM" id="SSF48452">
    <property type="entry name" value="TPR-like"/>
    <property type="match status" value="1"/>
</dbReference>
<protein>
    <recommendedName>
        <fullName>Protein MSS2, mitochondrial</fullName>
    </recommendedName>
</protein>
<sequence length="351" mass="41476">MQRFVSKFVSTPPVPKKFQEIFPKKRTVNKILFQLDTRLTYHEMYPIFLQVSQNTNEENIPWRKKYPYIRSSDIMQMRNVLITLRTQNKFVHKDLLAMEDKLLNIAAELGNNDAISILSFNVIHEYKKENVKSSYEKDIETANEFIKKLYARNHHLTVKLIGDLFFENKTYDKAEKYYQEFLKLENSTKLAGEVHGKLGEIQIKQVNGFLKAEKSWLSCIELLEIERSSRWYFLLARLYMSSEPMKAKALLENCASIGFKECFKTLGFLELNYFNNYERAKEWFKTGMEIMDLECFFGFFDCCVKEENFKGARDCLESVKKLGNDKDKKTMINVFLESRKDSIKLLDKARL</sequence>
<evidence type="ECO:0000255" key="1"/>
<evidence type="ECO:0000269" key="2">
    <source>
    </source>
</evidence>
<evidence type="ECO:0000269" key="3">
    <source>
    </source>
</evidence>
<evidence type="ECO:0000269" key="4">
    <source>
    </source>
</evidence>
<evidence type="ECO:0000305" key="5"/>
<proteinExistence type="evidence at protein level"/>
<comment type="function">
    <text evidence="2">Required to stabilize mitochondrial cytochrome C oxidase subunit 2 (COX2) and to translocate the C-terminal domain of COX2 through the inner membrane.</text>
</comment>
<comment type="subunit">
    <text evidence="3">Interacts with COX18.</text>
</comment>
<comment type="subcellular location">
    <subcellularLocation>
        <location evidence="5">Mitochondrion inner membrane</location>
    </subcellularLocation>
</comment>
<comment type="miscellaneous">
    <text evidence="4">Present with 736 molecules/cell in log phase SD medium.</text>
</comment>
<gene>
    <name type="primary">MSS2</name>
    <name type="ordered locus">YDL107W</name>
    <name type="ORF">D2340</name>
</gene>
<accession>P40990</accession>
<accession>D6VRP3</accession>